<gene>
    <name evidence="1" type="primary">rplT</name>
    <name type="ordered locus">A2cp1_1990</name>
</gene>
<sequence length="114" mass="13167">MRVKKGFKARRRRNRVLKLAKGFRGRRKNCYRRANQAVERALNYSTRDRRLKRREFRALWIVRINAAARQNGTTYSKLVAALRKAGIEIDRKILADLALALPGDFAAIVKTAQA</sequence>
<proteinExistence type="inferred from homology"/>
<accession>B8J832</accession>
<feature type="chain" id="PRO_1000193932" description="Large ribosomal subunit protein bL20">
    <location>
        <begin position="1"/>
        <end position="114"/>
    </location>
</feature>
<reference key="1">
    <citation type="submission" date="2009-01" db="EMBL/GenBank/DDBJ databases">
        <title>Complete sequence of Anaeromyxobacter dehalogenans 2CP-1.</title>
        <authorList>
            <person name="Lucas S."/>
            <person name="Copeland A."/>
            <person name="Lapidus A."/>
            <person name="Glavina del Rio T."/>
            <person name="Dalin E."/>
            <person name="Tice H."/>
            <person name="Bruce D."/>
            <person name="Goodwin L."/>
            <person name="Pitluck S."/>
            <person name="Saunders E."/>
            <person name="Brettin T."/>
            <person name="Detter J.C."/>
            <person name="Han C."/>
            <person name="Larimer F."/>
            <person name="Land M."/>
            <person name="Hauser L."/>
            <person name="Kyrpides N."/>
            <person name="Ovchinnikova G."/>
            <person name="Beliaev A.S."/>
            <person name="Richardson P."/>
        </authorList>
    </citation>
    <scope>NUCLEOTIDE SEQUENCE [LARGE SCALE GENOMIC DNA]</scope>
    <source>
        <strain>2CP-1 / ATCC BAA-258</strain>
    </source>
</reference>
<dbReference type="EMBL" id="CP001359">
    <property type="protein sequence ID" value="ACL65331.1"/>
    <property type="molecule type" value="Genomic_DNA"/>
</dbReference>
<dbReference type="RefSeq" id="WP_012525947.1">
    <property type="nucleotide sequence ID" value="NC_011891.1"/>
</dbReference>
<dbReference type="SMR" id="B8J832"/>
<dbReference type="KEGG" id="acp:A2cp1_1990"/>
<dbReference type="HOGENOM" id="CLU_123265_0_1_7"/>
<dbReference type="Proteomes" id="UP000007089">
    <property type="component" value="Chromosome"/>
</dbReference>
<dbReference type="GO" id="GO:1990904">
    <property type="term" value="C:ribonucleoprotein complex"/>
    <property type="evidence" value="ECO:0007669"/>
    <property type="project" value="UniProtKB-KW"/>
</dbReference>
<dbReference type="GO" id="GO:0005840">
    <property type="term" value="C:ribosome"/>
    <property type="evidence" value="ECO:0007669"/>
    <property type="project" value="UniProtKB-KW"/>
</dbReference>
<dbReference type="GO" id="GO:0019843">
    <property type="term" value="F:rRNA binding"/>
    <property type="evidence" value="ECO:0007669"/>
    <property type="project" value="UniProtKB-UniRule"/>
</dbReference>
<dbReference type="GO" id="GO:0003735">
    <property type="term" value="F:structural constituent of ribosome"/>
    <property type="evidence" value="ECO:0007669"/>
    <property type="project" value="InterPro"/>
</dbReference>
<dbReference type="GO" id="GO:0000027">
    <property type="term" value="P:ribosomal large subunit assembly"/>
    <property type="evidence" value="ECO:0007669"/>
    <property type="project" value="UniProtKB-UniRule"/>
</dbReference>
<dbReference type="GO" id="GO:0006412">
    <property type="term" value="P:translation"/>
    <property type="evidence" value="ECO:0007669"/>
    <property type="project" value="InterPro"/>
</dbReference>
<dbReference type="CDD" id="cd07026">
    <property type="entry name" value="Ribosomal_L20"/>
    <property type="match status" value="1"/>
</dbReference>
<dbReference type="FunFam" id="1.10.1900.20:FF:000001">
    <property type="entry name" value="50S ribosomal protein L20"/>
    <property type="match status" value="1"/>
</dbReference>
<dbReference type="Gene3D" id="6.10.160.10">
    <property type="match status" value="1"/>
</dbReference>
<dbReference type="Gene3D" id="1.10.1900.20">
    <property type="entry name" value="Ribosomal protein L20"/>
    <property type="match status" value="1"/>
</dbReference>
<dbReference type="HAMAP" id="MF_00382">
    <property type="entry name" value="Ribosomal_bL20"/>
    <property type="match status" value="1"/>
</dbReference>
<dbReference type="InterPro" id="IPR005813">
    <property type="entry name" value="Ribosomal_bL20"/>
</dbReference>
<dbReference type="InterPro" id="IPR035566">
    <property type="entry name" value="Ribosomal_protein_bL20_C"/>
</dbReference>
<dbReference type="NCBIfam" id="TIGR01032">
    <property type="entry name" value="rplT_bact"/>
    <property type="match status" value="1"/>
</dbReference>
<dbReference type="PANTHER" id="PTHR10986">
    <property type="entry name" value="39S RIBOSOMAL PROTEIN L20"/>
    <property type="match status" value="1"/>
</dbReference>
<dbReference type="Pfam" id="PF00453">
    <property type="entry name" value="Ribosomal_L20"/>
    <property type="match status" value="1"/>
</dbReference>
<dbReference type="PRINTS" id="PR00062">
    <property type="entry name" value="RIBOSOMALL20"/>
</dbReference>
<dbReference type="SUPFAM" id="SSF74731">
    <property type="entry name" value="Ribosomal protein L20"/>
    <property type="match status" value="1"/>
</dbReference>
<evidence type="ECO:0000255" key="1">
    <source>
        <dbReference type="HAMAP-Rule" id="MF_00382"/>
    </source>
</evidence>
<evidence type="ECO:0000305" key="2"/>
<protein>
    <recommendedName>
        <fullName evidence="1">Large ribosomal subunit protein bL20</fullName>
    </recommendedName>
    <alternativeName>
        <fullName evidence="2">50S ribosomal protein L20</fullName>
    </alternativeName>
</protein>
<organism>
    <name type="scientific">Anaeromyxobacter dehalogenans (strain 2CP-1 / ATCC BAA-258)</name>
    <dbReference type="NCBI Taxonomy" id="455488"/>
    <lineage>
        <taxon>Bacteria</taxon>
        <taxon>Pseudomonadati</taxon>
        <taxon>Myxococcota</taxon>
        <taxon>Myxococcia</taxon>
        <taxon>Myxococcales</taxon>
        <taxon>Cystobacterineae</taxon>
        <taxon>Anaeromyxobacteraceae</taxon>
        <taxon>Anaeromyxobacter</taxon>
    </lineage>
</organism>
<keyword id="KW-0687">Ribonucleoprotein</keyword>
<keyword id="KW-0689">Ribosomal protein</keyword>
<keyword id="KW-0694">RNA-binding</keyword>
<keyword id="KW-0699">rRNA-binding</keyword>
<comment type="function">
    <text evidence="1">Binds directly to 23S ribosomal RNA and is necessary for the in vitro assembly process of the 50S ribosomal subunit. It is not involved in the protein synthesizing functions of that subunit.</text>
</comment>
<comment type="similarity">
    <text evidence="1">Belongs to the bacterial ribosomal protein bL20 family.</text>
</comment>
<name>RL20_ANAD2</name>